<dbReference type="EMBL" id="CP001396">
    <property type="protein sequence ID" value="ACR61852.1"/>
    <property type="molecule type" value="Genomic_DNA"/>
</dbReference>
<dbReference type="RefSeq" id="WP_000941212.1">
    <property type="nucleotide sequence ID" value="NC_012759.1"/>
</dbReference>
<dbReference type="SMR" id="C4ZUG8"/>
<dbReference type="GeneID" id="93778674"/>
<dbReference type="KEGG" id="ebw:BWG_3004"/>
<dbReference type="HOGENOM" id="CLU_078858_2_1_6"/>
<dbReference type="GO" id="GO:0022625">
    <property type="term" value="C:cytosolic large ribosomal subunit"/>
    <property type="evidence" value="ECO:0007669"/>
    <property type="project" value="TreeGrafter"/>
</dbReference>
<dbReference type="GO" id="GO:0019843">
    <property type="term" value="F:rRNA binding"/>
    <property type="evidence" value="ECO:0007669"/>
    <property type="project" value="UniProtKB-UniRule"/>
</dbReference>
<dbReference type="GO" id="GO:0003735">
    <property type="term" value="F:structural constituent of ribosome"/>
    <property type="evidence" value="ECO:0007669"/>
    <property type="project" value="InterPro"/>
</dbReference>
<dbReference type="GO" id="GO:0000049">
    <property type="term" value="F:tRNA binding"/>
    <property type="evidence" value="ECO:0007669"/>
    <property type="project" value="UniProtKB-KW"/>
</dbReference>
<dbReference type="GO" id="GO:0006412">
    <property type="term" value="P:translation"/>
    <property type="evidence" value="ECO:0007669"/>
    <property type="project" value="UniProtKB-UniRule"/>
</dbReference>
<dbReference type="CDD" id="cd01433">
    <property type="entry name" value="Ribosomal_L16_L10e"/>
    <property type="match status" value="1"/>
</dbReference>
<dbReference type="FunFam" id="3.90.1170.10:FF:000001">
    <property type="entry name" value="50S ribosomal protein L16"/>
    <property type="match status" value="1"/>
</dbReference>
<dbReference type="Gene3D" id="3.90.1170.10">
    <property type="entry name" value="Ribosomal protein L10e/L16"/>
    <property type="match status" value="1"/>
</dbReference>
<dbReference type="HAMAP" id="MF_01342">
    <property type="entry name" value="Ribosomal_uL16"/>
    <property type="match status" value="1"/>
</dbReference>
<dbReference type="InterPro" id="IPR047873">
    <property type="entry name" value="Ribosomal_uL16"/>
</dbReference>
<dbReference type="InterPro" id="IPR000114">
    <property type="entry name" value="Ribosomal_uL16_bact-type"/>
</dbReference>
<dbReference type="InterPro" id="IPR020798">
    <property type="entry name" value="Ribosomal_uL16_CS"/>
</dbReference>
<dbReference type="InterPro" id="IPR016180">
    <property type="entry name" value="Ribosomal_uL16_dom"/>
</dbReference>
<dbReference type="InterPro" id="IPR036920">
    <property type="entry name" value="Ribosomal_uL16_sf"/>
</dbReference>
<dbReference type="NCBIfam" id="TIGR01164">
    <property type="entry name" value="rplP_bact"/>
    <property type="match status" value="1"/>
</dbReference>
<dbReference type="PANTHER" id="PTHR12220">
    <property type="entry name" value="50S/60S RIBOSOMAL PROTEIN L16"/>
    <property type="match status" value="1"/>
</dbReference>
<dbReference type="PANTHER" id="PTHR12220:SF13">
    <property type="entry name" value="LARGE RIBOSOMAL SUBUNIT PROTEIN UL16M"/>
    <property type="match status" value="1"/>
</dbReference>
<dbReference type="Pfam" id="PF00252">
    <property type="entry name" value="Ribosomal_L16"/>
    <property type="match status" value="1"/>
</dbReference>
<dbReference type="PRINTS" id="PR00060">
    <property type="entry name" value="RIBOSOMALL16"/>
</dbReference>
<dbReference type="SUPFAM" id="SSF54686">
    <property type="entry name" value="Ribosomal protein L16p/L10e"/>
    <property type="match status" value="1"/>
</dbReference>
<dbReference type="PROSITE" id="PS00586">
    <property type="entry name" value="RIBOSOMAL_L16_1"/>
    <property type="match status" value="1"/>
</dbReference>
<dbReference type="PROSITE" id="PS00701">
    <property type="entry name" value="RIBOSOMAL_L16_2"/>
    <property type="match status" value="1"/>
</dbReference>
<protein>
    <recommendedName>
        <fullName evidence="1">Large ribosomal subunit protein uL16</fullName>
    </recommendedName>
    <alternativeName>
        <fullName evidence="2">50S ribosomal protein L16</fullName>
    </alternativeName>
</protein>
<proteinExistence type="inferred from homology"/>
<sequence>MLQPKRTKFRKMHKGRNRGLAQGTDVSFGSFGLKAVGRGRLTARQIEAARRAMTRAVKRQGKIWIRVFPDKPITEKPLAVRMGKGKGNVEYWVALIQPGKVLYEMDGVPEELAREAFKLAAAKLPIKTTFVTKTVM</sequence>
<name>RL16_ECOBW</name>
<comment type="function">
    <text evidence="1">Binds 23S rRNA and is also seen to make contacts with the A and possibly P site tRNAs.</text>
</comment>
<comment type="subunit">
    <text evidence="1">Part of the 50S ribosomal subunit.</text>
</comment>
<comment type="similarity">
    <text evidence="1">Belongs to the universal ribosomal protein uL16 family.</text>
</comment>
<organism>
    <name type="scientific">Escherichia coli (strain K12 / MC4100 / BW2952)</name>
    <dbReference type="NCBI Taxonomy" id="595496"/>
    <lineage>
        <taxon>Bacteria</taxon>
        <taxon>Pseudomonadati</taxon>
        <taxon>Pseudomonadota</taxon>
        <taxon>Gammaproteobacteria</taxon>
        <taxon>Enterobacterales</taxon>
        <taxon>Enterobacteriaceae</taxon>
        <taxon>Escherichia</taxon>
    </lineage>
</organism>
<feature type="chain" id="PRO_1000214728" description="Large ribosomal subunit protein uL16">
    <location>
        <begin position="1"/>
        <end position="136"/>
    </location>
</feature>
<accession>C4ZUG8</accession>
<keyword id="KW-0687">Ribonucleoprotein</keyword>
<keyword id="KW-0689">Ribosomal protein</keyword>
<keyword id="KW-0694">RNA-binding</keyword>
<keyword id="KW-0699">rRNA-binding</keyword>
<keyword id="KW-0820">tRNA-binding</keyword>
<evidence type="ECO:0000255" key="1">
    <source>
        <dbReference type="HAMAP-Rule" id="MF_01342"/>
    </source>
</evidence>
<evidence type="ECO:0000305" key="2"/>
<gene>
    <name evidence="1" type="primary">rplP</name>
    <name type="ordered locus">BWG_3004</name>
</gene>
<reference key="1">
    <citation type="journal article" date="2009" name="J. Bacteriol.">
        <title>Genomic sequencing reveals regulatory mutations and recombinational events in the widely used MC4100 lineage of Escherichia coli K-12.</title>
        <authorList>
            <person name="Ferenci T."/>
            <person name="Zhou Z."/>
            <person name="Betteridge T."/>
            <person name="Ren Y."/>
            <person name="Liu Y."/>
            <person name="Feng L."/>
            <person name="Reeves P.R."/>
            <person name="Wang L."/>
        </authorList>
    </citation>
    <scope>NUCLEOTIDE SEQUENCE [LARGE SCALE GENOMIC DNA]</scope>
    <source>
        <strain>K12 / MC4100 / BW2952</strain>
    </source>
</reference>